<dbReference type="EC" id="4.2.3.5" evidence="1"/>
<dbReference type="EMBL" id="AM408590">
    <property type="protein sequence ID" value="CAL72550.1"/>
    <property type="molecule type" value="Genomic_DNA"/>
</dbReference>
<dbReference type="RefSeq" id="WP_003413027.1">
    <property type="nucleotide sequence ID" value="NC_008769.1"/>
</dbReference>
<dbReference type="SMR" id="A1KLN7"/>
<dbReference type="KEGG" id="mbb:BCG_2562c"/>
<dbReference type="HOGENOM" id="CLU_034547_2_0_11"/>
<dbReference type="UniPathway" id="UPA00053">
    <property type="reaction ID" value="UER00090"/>
</dbReference>
<dbReference type="Proteomes" id="UP000001472">
    <property type="component" value="Chromosome"/>
</dbReference>
<dbReference type="GO" id="GO:0005829">
    <property type="term" value="C:cytosol"/>
    <property type="evidence" value="ECO:0007669"/>
    <property type="project" value="TreeGrafter"/>
</dbReference>
<dbReference type="GO" id="GO:0004107">
    <property type="term" value="F:chorismate synthase activity"/>
    <property type="evidence" value="ECO:0007669"/>
    <property type="project" value="UniProtKB-UniRule"/>
</dbReference>
<dbReference type="GO" id="GO:0010181">
    <property type="term" value="F:FMN binding"/>
    <property type="evidence" value="ECO:0007669"/>
    <property type="project" value="TreeGrafter"/>
</dbReference>
<dbReference type="GO" id="GO:0008652">
    <property type="term" value="P:amino acid biosynthetic process"/>
    <property type="evidence" value="ECO:0007669"/>
    <property type="project" value="UniProtKB-KW"/>
</dbReference>
<dbReference type="GO" id="GO:0009073">
    <property type="term" value="P:aromatic amino acid family biosynthetic process"/>
    <property type="evidence" value="ECO:0007669"/>
    <property type="project" value="UniProtKB-KW"/>
</dbReference>
<dbReference type="GO" id="GO:0009423">
    <property type="term" value="P:chorismate biosynthetic process"/>
    <property type="evidence" value="ECO:0007669"/>
    <property type="project" value="UniProtKB-UniRule"/>
</dbReference>
<dbReference type="CDD" id="cd07304">
    <property type="entry name" value="Chorismate_synthase"/>
    <property type="match status" value="1"/>
</dbReference>
<dbReference type="FunFam" id="3.60.150.10:FF:000002">
    <property type="entry name" value="Chorismate synthase"/>
    <property type="match status" value="1"/>
</dbReference>
<dbReference type="Gene3D" id="3.60.150.10">
    <property type="entry name" value="Chorismate synthase AroC"/>
    <property type="match status" value="1"/>
</dbReference>
<dbReference type="HAMAP" id="MF_00300">
    <property type="entry name" value="Chorismate_synth"/>
    <property type="match status" value="1"/>
</dbReference>
<dbReference type="InterPro" id="IPR000453">
    <property type="entry name" value="Chorismate_synth"/>
</dbReference>
<dbReference type="InterPro" id="IPR035904">
    <property type="entry name" value="Chorismate_synth_AroC_sf"/>
</dbReference>
<dbReference type="InterPro" id="IPR020541">
    <property type="entry name" value="Chorismate_synthase_CS"/>
</dbReference>
<dbReference type="NCBIfam" id="TIGR00033">
    <property type="entry name" value="aroC"/>
    <property type="match status" value="1"/>
</dbReference>
<dbReference type="NCBIfam" id="NF003793">
    <property type="entry name" value="PRK05382.1"/>
    <property type="match status" value="1"/>
</dbReference>
<dbReference type="PANTHER" id="PTHR21085">
    <property type="entry name" value="CHORISMATE SYNTHASE"/>
    <property type="match status" value="1"/>
</dbReference>
<dbReference type="PANTHER" id="PTHR21085:SF0">
    <property type="entry name" value="CHORISMATE SYNTHASE"/>
    <property type="match status" value="1"/>
</dbReference>
<dbReference type="Pfam" id="PF01264">
    <property type="entry name" value="Chorismate_synt"/>
    <property type="match status" value="1"/>
</dbReference>
<dbReference type="PIRSF" id="PIRSF001456">
    <property type="entry name" value="Chorismate_synth"/>
    <property type="match status" value="1"/>
</dbReference>
<dbReference type="SUPFAM" id="SSF103263">
    <property type="entry name" value="Chorismate synthase, AroC"/>
    <property type="match status" value="1"/>
</dbReference>
<dbReference type="PROSITE" id="PS00787">
    <property type="entry name" value="CHORISMATE_SYNTHASE_1"/>
    <property type="match status" value="1"/>
</dbReference>
<dbReference type="PROSITE" id="PS00788">
    <property type="entry name" value="CHORISMATE_SYNTHASE_2"/>
    <property type="match status" value="1"/>
</dbReference>
<dbReference type="PROSITE" id="PS00789">
    <property type="entry name" value="CHORISMATE_SYNTHASE_3"/>
    <property type="match status" value="1"/>
</dbReference>
<keyword id="KW-0028">Amino-acid biosynthesis</keyword>
<keyword id="KW-0057">Aromatic amino acid biosynthesis</keyword>
<keyword id="KW-0274">FAD</keyword>
<keyword id="KW-0285">Flavoprotein</keyword>
<keyword id="KW-0288">FMN</keyword>
<keyword id="KW-0456">Lyase</keyword>
<keyword id="KW-0521">NADP</keyword>
<proteinExistence type="inferred from homology"/>
<accession>A1KLN7</accession>
<organism>
    <name type="scientific">Mycobacterium bovis (strain BCG / Pasteur 1173P2)</name>
    <dbReference type="NCBI Taxonomy" id="410289"/>
    <lineage>
        <taxon>Bacteria</taxon>
        <taxon>Bacillati</taxon>
        <taxon>Actinomycetota</taxon>
        <taxon>Actinomycetes</taxon>
        <taxon>Mycobacteriales</taxon>
        <taxon>Mycobacteriaceae</taxon>
        <taxon>Mycobacterium</taxon>
        <taxon>Mycobacterium tuberculosis complex</taxon>
    </lineage>
</organism>
<sequence>MLRWITAGESHGRALVAVVEGMVAGVHVTSADIADQLARRRLGYGRGARMTFERDAVTVLSGIRHGSTLGGPIAIEIGNTEWPKWETVMAADPVDPAELADVARNAPLTRPRPGHADYAGMLKYGFDDARPVLERASARETAARVAAGTVARAFLRQALGVEVLSHVISIGASAPYEGPPPRAEDLPAIDASPVRAYDKAAEADMIAQIEAAKKDGDTLGGVVEAVALGLPVGLGSFTSGDHRLDSQLAAAVMGIQAIKGVEIGDGFQTARRRGSRAHDEMYPGPDGVVRSTNRAGGLEGGMTNGQPLRVRAAMKPISTVPRALATVDLATGDEAVAIHQRSDVCAVPAAGVVVETMVALVLARAALEKFGGDSLAETQRNIAAYQRSVADREAPAARVSG</sequence>
<reference key="1">
    <citation type="journal article" date="2007" name="Proc. Natl. Acad. Sci. U.S.A.">
        <title>Genome plasticity of BCG and impact on vaccine efficacy.</title>
        <authorList>
            <person name="Brosch R."/>
            <person name="Gordon S.V."/>
            <person name="Garnier T."/>
            <person name="Eiglmeier K."/>
            <person name="Frigui W."/>
            <person name="Valenti P."/>
            <person name="Dos Santos S."/>
            <person name="Duthoy S."/>
            <person name="Lacroix C."/>
            <person name="Garcia-Pelayo C."/>
            <person name="Inwald J.K."/>
            <person name="Golby P."/>
            <person name="Garcia J.N."/>
            <person name="Hewinson R.G."/>
            <person name="Behr M.A."/>
            <person name="Quail M.A."/>
            <person name="Churcher C."/>
            <person name="Barrell B.G."/>
            <person name="Parkhill J."/>
            <person name="Cole S.T."/>
        </authorList>
    </citation>
    <scope>NUCLEOTIDE SEQUENCE [LARGE SCALE GENOMIC DNA]</scope>
    <source>
        <strain>BCG / Pasteur 1173P2</strain>
    </source>
</reference>
<protein>
    <recommendedName>
        <fullName evidence="1">Chorismate synthase</fullName>
        <shortName evidence="1">CS</shortName>
        <ecNumber evidence="1">4.2.3.5</ecNumber>
    </recommendedName>
    <alternativeName>
        <fullName evidence="1">5-enolpyruvylshikimate-3-phosphate phospholyase</fullName>
    </alternativeName>
</protein>
<name>AROC_MYCBP</name>
<gene>
    <name evidence="1" type="primary">aroC</name>
    <name type="ordered locus">BCG_2562c</name>
</gene>
<evidence type="ECO:0000255" key="1">
    <source>
        <dbReference type="HAMAP-Rule" id="MF_00300"/>
    </source>
</evidence>
<feature type="chain" id="PRO_0000322409" description="Chorismate synthase">
    <location>
        <begin position="1"/>
        <end position="401"/>
    </location>
</feature>
<feature type="binding site" evidence="1">
    <location>
        <position position="40"/>
    </location>
    <ligand>
        <name>NADP(+)</name>
        <dbReference type="ChEBI" id="CHEBI:58349"/>
    </ligand>
</feature>
<feature type="binding site" evidence="1">
    <location>
        <position position="46"/>
    </location>
    <ligand>
        <name>NADP(+)</name>
        <dbReference type="ChEBI" id="CHEBI:58349"/>
    </ligand>
</feature>
<feature type="binding site" evidence="1">
    <location>
        <begin position="135"/>
        <end position="137"/>
    </location>
    <ligand>
        <name>FMN</name>
        <dbReference type="ChEBI" id="CHEBI:58210"/>
    </ligand>
</feature>
<feature type="binding site" evidence="1">
    <location>
        <begin position="256"/>
        <end position="257"/>
    </location>
    <ligand>
        <name>FMN</name>
        <dbReference type="ChEBI" id="CHEBI:58210"/>
    </ligand>
</feature>
<feature type="binding site" evidence="1">
    <location>
        <position position="300"/>
    </location>
    <ligand>
        <name>FMN</name>
        <dbReference type="ChEBI" id="CHEBI:58210"/>
    </ligand>
</feature>
<feature type="binding site" evidence="1">
    <location>
        <begin position="315"/>
        <end position="319"/>
    </location>
    <ligand>
        <name>FMN</name>
        <dbReference type="ChEBI" id="CHEBI:58210"/>
    </ligand>
</feature>
<feature type="binding site" evidence="1">
    <location>
        <position position="341"/>
    </location>
    <ligand>
        <name>FMN</name>
        <dbReference type="ChEBI" id="CHEBI:58210"/>
    </ligand>
</feature>
<comment type="function">
    <text evidence="1">Catalyzes the anti-1,4-elimination of the C-3 phosphate and the C-6 proR hydrogen from 5-enolpyruvylshikimate-3-phosphate (EPSP) to yield chorismate, which is the branch point compound that serves as the starting substrate for the three terminal pathways of aromatic amino acid biosynthesis. This reaction introduces a second double bond into the aromatic ring system.</text>
</comment>
<comment type="catalytic activity">
    <reaction evidence="1">
        <text>5-O-(1-carboxyvinyl)-3-phosphoshikimate = chorismate + phosphate</text>
        <dbReference type="Rhea" id="RHEA:21020"/>
        <dbReference type="ChEBI" id="CHEBI:29748"/>
        <dbReference type="ChEBI" id="CHEBI:43474"/>
        <dbReference type="ChEBI" id="CHEBI:57701"/>
        <dbReference type="EC" id="4.2.3.5"/>
    </reaction>
</comment>
<comment type="cofactor">
    <cofactor evidence="1">
        <name>FMNH2</name>
        <dbReference type="ChEBI" id="CHEBI:57618"/>
    </cofactor>
    <text evidence="1">Reduced FMN (FMNH(2)).</text>
</comment>
<comment type="pathway">
    <text evidence="1">Metabolic intermediate biosynthesis; chorismate biosynthesis; chorismate from D-erythrose 4-phosphate and phosphoenolpyruvate: step 7/7.</text>
</comment>
<comment type="subunit">
    <text evidence="1">Homotetramer.</text>
</comment>
<comment type="similarity">
    <text evidence="1">Belongs to the chorismate synthase family.</text>
</comment>